<name>PG039_VAR67</name>
<organismHost>
    <name type="scientific">Homo sapiens</name>
    <name type="common">Human</name>
    <dbReference type="NCBI Taxonomy" id="9606"/>
</organismHost>
<comment type="induction">
    <text evidence="1">Expressed in the early phase of the viral replicative cycle.</text>
</comment>
<comment type="miscellaneous">
    <text>This protein is homologous to the N-terminus of poxviridae interferon antagonist K1L. Presumably a premature stop codon mutated the gene in variola.</text>
</comment>
<comment type="similarity">
    <text evidence="2">Belongs to the orthopoxvirus OPG039 family.</text>
</comment>
<protein>
    <recommendedName>
        <fullName>Truncated interferon antagonist OPG039</fullName>
    </recommendedName>
</protein>
<reference key="1">
    <citation type="journal article" date="1993" name="FEBS Lett.">
        <title>Genes of variola and vaccinia viruses necessary to overcome the host protective mechanisms.</title>
        <authorList>
            <person name="Shchelkunov S.N."/>
            <person name="Blinov V.M."/>
            <person name="Sandakhchiev L.S."/>
        </authorList>
    </citation>
    <scope>NUCLEOTIDE SEQUENCE [GENOMIC DNA]</scope>
</reference>
<evidence type="ECO:0000250" key="1">
    <source>
        <dbReference type="UniProtKB" id="P04297"/>
    </source>
</evidence>
<evidence type="ECO:0000305" key="2"/>
<proteinExistence type="inferred from homology"/>
<dbReference type="EMBL" id="X69198">
    <property type="protein sequence ID" value="CAA48962.1"/>
    <property type="molecule type" value="Genomic_DNA"/>
</dbReference>
<dbReference type="PIR" id="A36839">
    <property type="entry name" value="A36839"/>
</dbReference>
<dbReference type="RefSeq" id="NP_042065.1">
    <property type="nucleotide sequence ID" value="NC_001611.1"/>
</dbReference>
<dbReference type="SMR" id="P0DTP8"/>
<dbReference type="GeneID" id="1486576"/>
<dbReference type="KEGG" id="vg:1486576"/>
<dbReference type="Proteomes" id="UP000002060">
    <property type="component" value="Segment"/>
</dbReference>
<dbReference type="Gene3D" id="1.25.40.20">
    <property type="entry name" value="Ankyrin repeat-containing domain"/>
    <property type="match status" value="1"/>
</dbReference>
<dbReference type="InterPro" id="IPR002110">
    <property type="entry name" value="Ankyrin_rpt"/>
</dbReference>
<dbReference type="InterPro" id="IPR036770">
    <property type="entry name" value="Ankyrin_rpt-contain_sf"/>
</dbReference>
<dbReference type="SUPFAM" id="SSF48403">
    <property type="entry name" value="Ankyrin repeat"/>
    <property type="match status" value="1"/>
</dbReference>
<dbReference type="PROSITE" id="PS50297">
    <property type="entry name" value="ANK_REP_REGION"/>
    <property type="match status" value="1"/>
</dbReference>
<dbReference type="PROSITE" id="PS50088">
    <property type="entry name" value="ANK_REPEAT"/>
    <property type="match status" value="1"/>
</dbReference>
<gene>
    <name type="primary">OPG040</name>
    <name type="ORF">C1L</name>
</gene>
<keyword id="KW-0040">ANK repeat</keyword>
<keyword id="KW-0244">Early protein</keyword>
<keyword id="KW-1185">Reference proteome</keyword>
<accession>P0DTP8</accession>
<accession>P33797</accession>
<organism>
    <name type="scientific">Variola virus (isolate Human/India/Ind3/1967)</name>
    <name type="common">VARV</name>
    <name type="synonym">Smallpox virus</name>
    <dbReference type="NCBI Taxonomy" id="587200"/>
    <lineage>
        <taxon>Viruses</taxon>
        <taxon>Varidnaviria</taxon>
        <taxon>Bamfordvirae</taxon>
        <taxon>Nucleocytoviricota</taxon>
        <taxon>Pokkesviricetes</taxon>
        <taxon>Chitovirales</taxon>
        <taxon>Poxviridae</taxon>
        <taxon>Chordopoxvirinae</taxon>
        <taxon>Orthopoxvirus</taxon>
        <taxon>Variola virus</taxon>
    </lineage>
</organism>
<sequence>MDLSRINTRKSKQLKSFLSSKDTFKADVHGHSALYYAIADNNMRLVCTLLNAGALKNLLENEFPLH</sequence>
<feature type="chain" id="PRO_0000067082" description="Truncated interferon antagonist OPG039">
    <location>
        <begin position="1"/>
        <end position="66"/>
    </location>
</feature>
<feature type="repeat" description="ANK">
    <location>
        <begin position="29"/>
        <end position="58"/>
    </location>
</feature>